<comment type="function">
    <text>Tubulin is the major constituent of microtubules, a cylinder consisting of laterally associated linear protofilaments composed of alpha- and beta-tubulin heterodimers. Microtubules grow by the addition of GTP-tubulin dimers to the microtubule end, where a stabilizing cap forms. Below the cap, tubulin dimers are in GDP-bound state, owing to GTPase activity of alpha-tubulin.</text>
</comment>
<comment type="catalytic activity">
    <reaction evidence="2">
        <text>GTP + H2O = GDP + phosphate + H(+)</text>
        <dbReference type="Rhea" id="RHEA:19669"/>
        <dbReference type="ChEBI" id="CHEBI:15377"/>
        <dbReference type="ChEBI" id="CHEBI:15378"/>
        <dbReference type="ChEBI" id="CHEBI:37565"/>
        <dbReference type="ChEBI" id="CHEBI:43474"/>
        <dbReference type="ChEBI" id="CHEBI:58189"/>
    </reaction>
    <physiologicalReaction direction="left-to-right" evidence="2">
        <dbReference type="Rhea" id="RHEA:19670"/>
    </physiologicalReaction>
</comment>
<comment type="cofactor">
    <cofactor evidence="2">
        <name>Mg(2+)</name>
        <dbReference type="ChEBI" id="CHEBI:18420"/>
    </cofactor>
</comment>
<comment type="subunit">
    <text>Dimer of alpha and beta chains. A typical microtubule is a hollow water-filled tube with an outer diameter of 25 nm and an inner diameter of 15 nM. Alpha-beta heterodimers associate head-to-tail to form protofilaments running lengthwise along the microtubule wall with the beta-tubulin subunit facing the microtubule plus end conferring a structural polarity. Microtubules usually have 13 protofilaments but different protofilament numbers can be found in some organisms and specialized cells.</text>
</comment>
<comment type="subcellular location">
    <subcellularLocation>
        <location>Cytoplasm</location>
        <location>Cytoskeleton</location>
    </subcellularLocation>
</comment>
<comment type="similarity">
    <text evidence="4">Belongs to the tubulin family.</text>
</comment>
<evidence type="ECO:0000250" key="1"/>
<evidence type="ECO:0000250" key="2">
    <source>
        <dbReference type="UniProtKB" id="P68363"/>
    </source>
</evidence>
<evidence type="ECO:0000269" key="3">
    <source>
    </source>
</evidence>
<evidence type="ECO:0000305" key="4"/>
<accession>P04689</accession>
<accession>Q9HGL7</accession>
<gene>
    <name type="primary">tub1</name>
    <name type="synonym">alp2</name>
    <name type="synonym">atb2</name>
    <name type="ORF">SPBC800.05c</name>
</gene>
<proteinExistence type="evidence at protein level"/>
<protein>
    <recommendedName>
        <fullName>Tubulin alpha-2 chain</fullName>
        <ecNumber evidence="2">3.6.5.-</ecNumber>
    </recommendedName>
</protein>
<reference key="1">
    <citation type="journal article" date="1984" name="Cell">
        <title>Identification of the pleiotropic cell division cycle gene NDA2 as one of two different alpha-tubulin genes in Schizosaccharomyces pombe.</title>
        <authorList>
            <person name="Toda T."/>
            <person name="Adachi Y."/>
            <person name="Hiraoka Y."/>
            <person name="Yanagida M."/>
        </authorList>
    </citation>
    <scope>NUCLEOTIDE SEQUENCE [GENOMIC DNA]</scope>
</reference>
<reference key="2">
    <citation type="journal article" date="2002" name="Nature">
        <title>The genome sequence of Schizosaccharomyces pombe.</title>
        <authorList>
            <person name="Wood V."/>
            <person name="Gwilliam R."/>
            <person name="Rajandream M.A."/>
            <person name="Lyne M.H."/>
            <person name="Lyne R."/>
            <person name="Stewart A."/>
            <person name="Sgouros J.G."/>
            <person name="Peat N."/>
            <person name="Hayles J."/>
            <person name="Baker S.G."/>
            <person name="Basham D."/>
            <person name="Bowman S."/>
            <person name="Brooks K."/>
            <person name="Brown D."/>
            <person name="Brown S."/>
            <person name="Chillingworth T."/>
            <person name="Churcher C.M."/>
            <person name="Collins M."/>
            <person name="Connor R."/>
            <person name="Cronin A."/>
            <person name="Davis P."/>
            <person name="Feltwell T."/>
            <person name="Fraser A."/>
            <person name="Gentles S."/>
            <person name="Goble A."/>
            <person name="Hamlin N."/>
            <person name="Harris D.E."/>
            <person name="Hidalgo J."/>
            <person name="Hodgson G."/>
            <person name="Holroyd S."/>
            <person name="Hornsby T."/>
            <person name="Howarth S."/>
            <person name="Huckle E.J."/>
            <person name="Hunt S."/>
            <person name="Jagels K."/>
            <person name="James K.D."/>
            <person name="Jones L."/>
            <person name="Jones M."/>
            <person name="Leather S."/>
            <person name="McDonald S."/>
            <person name="McLean J."/>
            <person name="Mooney P."/>
            <person name="Moule S."/>
            <person name="Mungall K.L."/>
            <person name="Murphy L.D."/>
            <person name="Niblett D."/>
            <person name="Odell C."/>
            <person name="Oliver K."/>
            <person name="O'Neil S."/>
            <person name="Pearson D."/>
            <person name="Quail M.A."/>
            <person name="Rabbinowitsch E."/>
            <person name="Rutherford K.M."/>
            <person name="Rutter S."/>
            <person name="Saunders D."/>
            <person name="Seeger K."/>
            <person name="Sharp S."/>
            <person name="Skelton J."/>
            <person name="Simmonds M.N."/>
            <person name="Squares R."/>
            <person name="Squares S."/>
            <person name="Stevens K."/>
            <person name="Taylor K."/>
            <person name="Taylor R.G."/>
            <person name="Tivey A."/>
            <person name="Walsh S.V."/>
            <person name="Warren T."/>
            <person name="Whitehead S."/>
            <person name="Woodward J.R."/>
            <person name="Volckaert G."/>
            <person name="Aert R."/>
            <person name="Robben J."/>
            <person name="Grymonprez B."/>
            <person name="Weltjens I."/>
            <person name="Vanstreels E."/>
            <person name="Rieger M."/>
            <person name="Schaefer M."/>
            <person name="Mueller-Auer S."/>
            <person name="Gabel C."/>
            <person name="Fuchs M."/>
            <person name="Duesterhoeft A."/>
            <person name="Fritzc C."/>
            <person name="Holzer E."/>
            <person name="Moestl D."/>
            <person name="Hilbert H."/>
            <person name="Borzym K."/>
            <person name="Langer I."/>
            <person name="Beck A."/>
            <person name="Lehrach H."/>
            <person name="Reinhardt R."/>
            <person name="Pohl T.M."/>
            <person name="Eger P."/>
            <person name="Zimmermann W."/>
            <person name="Wedler H."/>
            <person name="Wambutt R."/>
            <person name="Purnelle B."/>
            <person name="Goffeau A."/>
            <person name="Cadieu E."/>
            <person name="Dreano S."/>
            <person name="Gloux S."/>
            <person name="Lelaure V."/>
            <person name="Mottier S."/>
            <person name="Galibert F."/>
            <person name="Aves S.J."/>
            <person name="Xiang Z."/>
            <person name="Hunt C."/>
            <person name="Moore K."/>
            <person name="Hurst S.M."/>
            <person name="Lucas M."/>
            <person name="Rochet M."/>
            <person name="Gaillardin C."/>
            <person name="Tallada V.A."/>
            <person name="Garzon A."/>
            <person name="Thode G."/>
            <person name="Daga R.R."/>
            <person name="Cruzado L."/>
            <person name="Jimenez J."/>
            <person name="Sanchez M."/>
            <person name="del Rey F."/>
            <person name="Benito J."/>
            <person name="Dominguez A."/>
            <person name="Revuelta J.L."/>
            <person name="Moreno S."/>
            <person name="Armstrong J."/>
            <person name="Forsburg S.L."/>
            <person name="Cerutti L."/>
            <person name="Lowe T."/>
            <person name="McCombie W.R."/>
            <person name="Paulsen I."/>
            <person name="Potashkin J."/>
            <person name="Shpakovski G.V."/>
            <person name="Ussery D."/>
            <person name="Barrell B.G."/>
            <person name="Nurse P."/>
        </authorList>
    </citation>
    <scope>NUCLEOTIDE SEQUENCE [LARGE SCALE GENOMIC DNA]</scope>
    <source>
        <strain>972 / ATCC 24843</strain>
    </source>
</reference>
<reference key="3">
    <citation type="journal article" date="1998" name="Mol. Biol. Cell">
        <title>Identification of novel temperature-sensitive lethal alleles in essential beta-tubulin and nonessential alpha 2-tubulin genes as fission yeast polarity mutants.</title>
        <authorList>
            <person name="Radcliffe P."/>
            <person name="Hirata D."/>
            <person name="Childs D."/>
            <person name="Vardy L."/>
            <person name="Toda T."/>
        </authorList>
    </citation>
    <scope>MUTAGENESIS OF GLY-246 AND CYS-356</scope>
</reference>
<feature type="chain" id="PRO_0000048226" description="Tubulin alpha-2 chain">
    <location>
        <begin position="1"/>
        <end position="449"/>
    </location>
</feature>
<feature type="active site" evidence="2">
    <location>
        <position position="254"/>
    </location>
</feature>
<feature type="binding site" evidence="2">
    <location>
        <position position="11"/>
    </location>
    <ligand>
        <name>GTP</name>
        <dbReference type="ChEBI" id="CHEBI:37565"/>
    </ligand>
</feature>
<feature type="binding site" evidence="2">
    <location>
        <position position="71"/>
    </location>
    <ligand>
        <name>GTP</name>
        <dbReference type="ChEBI" id="CHEBI:37565"/>
    </ligand>
</feature>
<feature type="binding site" evidence="2">
    <location>
        <position position="71"/>
    </location>
    <ligand>
        <name>Mg(2+)</name>
        <dbReference type="ChEBI" id="CHEBI:18420"/>
    </ligand>
</feature>
<feature type="binding site" evidence="2">
    <location>
        <position position="140"/>
    </location>
    <ligand>
        <name>GTP</name>
        <dbReference type="ChEBI" id="CHEBI:37565"/>
    </ligand>
</feature>
<feature type="binding site" evidence="2">
    <location>
        <position position="144"/>
    </location>
    <ligand>
        <name>GTP</name>
        <dbReference type="ChEBI" id="CHEBI:37565"/>
    </ligand>
</feature>
<feature type="binding site" evidence="2">
    <location>
        <position position="145"/>
    </location>
    <ligand>
        <name>GTP</name>
        <dbReference type="ChEBI" id="CHEBI:37565"/>
    </ligand>
</feature>
<feature type="binding site" evidence="2">
    <location>
        <position position="179"/>
    </location>
    <ligand>
        <name>GTP</name>
        <dbReference type="ChEBI" id="CHEBI:37565"/>
    </ligand>
</feature>
<feature type="binding site" evidence="2">
    <location>
        <position position="206"/>
    </location>
    <ligand>
        <name>GTP</name>
        <dbReference type="ChEBI" id="CHEBI:37565"/>
    </ligand>
</feature>
<feature type="binding site" evidence="2">
    <location>
        <position position="228"/>
    </location>
    <ligand>
        <name>GTP</name>
        <dbReference type="ChEBI" id="CHEBI:37565"/>
    </ligand>
</feature>
<feature type="site" description="Involved in polymerization" evidence="1">
    <location>
        <position position="449"/>
    </location>
</feature>
<feature type="mutagenesis site" description="Temperature sensitive." evidence="3">
    <original>G</original>
    <variation>D</variation>
    <location>
        <position position="246"/>
    </location>
</feature>
<feature type="mutagenesis site" description="Temperature sensitive." evidence="3">
    <original>C</original>
    <variation>Y</variation>
    <location>
        <position position="356"/>
    </location>
</feature>
<feature type="sequence conflict" description="In Ref. 1; AAA35351." evidence="4" ref="1">
    <original>G</original>
    <variation>D</variation>
    <location>
        <position position="81"/>
    </location>
</feature>
<feature type="sequence conflict" description="In Ref. 1; AAA35351." evidence="4" ref="1">
    <original>A</original>
    <variation>G</variation>
    <location>
        <position position="126"/>
    </location>
</feature>
<dbReference type="EC" id="3.6.5.-" evidence="2"/>
<dbReference type="EMBL" id="K02842">
    <property type="protein sequence ID" value="AAA35351.1"/>
    <property type="molecule type" value="Genomic_DNA"/>
</dbReference>
<dbReference type="EMBL" id="CU329671">
    <property type="protein sequence ID" value="CAC01520.1"/>
    <property type="molecule type" value="Genomic_DNA"/>
</dbReference>
<dbReference type="PIR" id="B25072">
    <property type="entry name" value="B25072"/>
</dbReference>
<dbReference type="RefSeq" id="NP_595106.1">
    <property type="nucleotide sequence ID" value="NM_001021013.2"/>
</dbReference>
<dbReference type="SMR" id="P04689"/>
<dbReference type="BioGRID" id="277452">
    <property type="interactions" value="191"/>
</dbReference>
<dbReference type="FunCoup" id="P04689">
    <property type="interactions" value="120"/>
</dbReference>
<dbReference type="IntAct" id="P04689">
    <property type="interactions" value="12"/>
</dbReference>
<dbReference type="MINT" id="P04689"/>
<dbReference type="STRING" id="284812.P04689"/>
<dbReference type="iPTMnet" id="P04689"/>
<dbReference type="PaxDb" id="4896-SPBC800.05c.1"/>
<dbReference type="EnsemblFungi" id="SPBC800.05c.1">
    <property type="protein sequence ID" value="SPBC800.05c.1:pep"/>
    <property type="gene ID" value="SPBC800.05c"/>
</dbReference>
<dbReference type="GeneID" id="2540936"/>
<dbReference type="KEGG" id="spo:2540936"/>
<dbReference type="PomBase" id="SPBC800.05c"/>
<dbReference type="VEuPathDB" id="FungiDB:SPBC800.05c"/>
<dbReference type="eggNOG" id="KOG1376">
    <property type="taxonomic scope" value="Eukaryota"/>
</dbReference>
<dbReference type="HOGENOM" id="CLU_015718_1_1_1"/>
<dbReference type="InParanoid" id="P04689"/>
<dbReference type="OMA" id="ESCYDIC"/>
<dbReference type="PhylomeDB" id="P04689"/>
<dbReference type="Reactome" id="R-SPO-114608">
    <property type="pathway name" value="Platelet degranulation"/>
</dbReference>
<dbReference type="PRO" id="PR:P04689"/>
<dbReference type="Proteomes" id="UP000002485">
    <property type="component" value="Chromosome II"/>
</dbReference>
<dbReference type="GO" id="GO:0000235">
    <property type="term" value="C:astral microtubule"/>
    <property type="evidence" value="ECO:0000303"/>
    <property type="project" value="PomBase"/>
</dbReference>
<dbReference type="GO" id="GO:0005737">
    <property type="term" value="C:cytoplasm"/>
    <property type="evidence" value="ECO:0000318"/>
    <property type="project" value="GO_Central"/>
</dbReference>
<dbReference type="GO" id="GO:0005829">
    <property type="term" value="C:cytosol"/>
    <property type="evidence" value="ECO:0007005"/>
    <property type="project" value="PomBase"/>
</dbReference>
<dbReference type="GO" id="GO:0005874">
    <property type="term" value="C:microtubule"/>
    <property type="evidence" value="ECO:0000314"/>
    <property type="project" value="PomBase"/>
</dbReference>
<dbReference type="GO" id="GO:0005634">
    <property type="term" value="C:nucleus"/>
    <property type="evidence" value="ECO:0007005"/>
    <property type="project" value="PomBase"/>
</dbReference>
<dbReference type="GO" id="GO:0005819">
    <property type="term" value="C:spindle"/>
    <property type="evidence" value="ECO:0000318"/>
    <property type="project" value="GO_Central"/>
</dbReference>
<dbReference type="GO" id="GO:0005876">
    <property type="term" value="C:spindle microtubule"/>
    <property type="evidence" value="ECO:0000314"/>
    <property type="project" value="PomBase"/>
</dbReference>
<dbReference type="GO" id="GO:0005525">
    <property type="term" value="F:GTP binding"/>
    <property type="evidence" value="ECO:0000318"/>
    <property type="project" value="GO_Central"/>
</dbReference>
<dbReference type="GO" id="GO:0016787">
    <property type="term" value="F:hydrolase activity"/>
    <property type="evidence" value="ECO:0007669"/>
    <property type="project" value="UniProtKB-KW"/>
</dbReference>
<dbReference type="GO" id="GO:0046872">
    <property type="term" value="F:metal ion binding"/>
    <property type="evidence" value="ECO:0007669"/>
    <property type="project" value="UniProtKB-KW"/>
</dbReference>
<dbReference type="GO" id="GO:0005200">
    <property type="term" value="F:structural constituent of cytoskeleton"/>
    <property type="evidence" value="ECO:0000318"/>
    <property type="project" value="GO_Central"/>
</dbReference>
<dbReference type="GO" id="GO:0031122">
    <property type="term" value="P:cytoplasmic microtubule organization"/>
    <property type="evidence" value="ECO:0000315"/>
    <property type="project" value="PomBase"/>
</dbReference>
<dbReference type="GO" id="GO:0000226">
    <property type="term" value="P:microtubule cytoskeleton organization"/>
    <property type="evidence" value="ECO:0000318"/>
    <property type="project" value="GO_Central"/>
</dbReference>
<dbReference type="GO" id="GO:0048311">
    <property type="term" value="P:mitochondrion distribution"/>
    <property type="evidence" value="ECO:0000315"/>
    <property type="project" value="PomBase"/>
</dbReference>
<dbReference type="GO" id="GO:0000278">
    <property type="term" value="P:mitotic cell cycle"/>
    <property type="evidence" value="ECO:0000318"/>
    <property type="project" value="GO_Central"/>
</dbReference>
<dbReference type="GO" id="GO:0007052">
    <property type="term" value="P:mitotic spindle organization"/>
    <property type="evidence" value="ECO:0000315"/>
    <property type="project" value="PomBase"/>
</dbReference>
<dbReference type="GO" id="GO:0000280">
    <property type="term" value="P:nuclear division"/>
    <property type="evidence" value="ECO:0000318"/>
    <property type="project" value="GO_Central"/>
</dbReference>
<dbReference type="GO" id="GO:0098863">
    <property type="term" value="P:nuclear migration by microtubule mediated pushing forces"/>
    <property type="evidence" value="ECO:0000314"/>
    <property type="project" value="PomBase"/>
</dbReference>
<dbReference type="CDD" id="cd02186">
    <property type="entry name" value="alpha_tubulin"/>
    <property type="match status" value="1"/>
</dbReference>
<dbReference type="FunFam" id="1.10.287.600:FF:000005">
    <property type="entry name" value="Tubulin alpha chain"/>
    <property type="match status" value="1"/>
</dbReference>
<dbReference type="FunFam" id="3.30.1330.20:FF:000001">
    <property type="entry name" value="Tubulin alpha chain"/>
    <property type="match status" value="1"/>
</dbReference>
<dbReference type="FunFam" id="3.40.50.1440:FF:000008">
    <property type="entry name" value="Tubulin alpha chain"/>
    <property type="match status" value="1"/>
</dbReference>
<dbReference type="Gene3D" id="1.10.287.600">
    <property type="entry name" value="Helix hairpin bin"/>
    <property type="match status" value="1"/>
</dbReference>
<dbReference type="Gene3D" id="3.30.1330.20">
    <property type="entry name" value="Tubulin/FtsZ, C-terminal domain"/>
    <property type="match status" value="1"/>
</dbReference>
<dbReference type="Gene3D" id="3.40.50.1440">
    <property type="entry name" value="Tubulin/FtsZ, GTPase domain"/>
    <property type="match status" value="1"/>
</dbReference>
<dbReference type="InterPro" id="IPR002452">
    <property type="entry name" value="Alpha_tubulin"/>
</dbReference>
<dbReference type="InterPro" id="IPR013838">
    <property type="entry name" value="Beta-tubulin_BS"/>
</dbReference>
<dbReference type="InterPro" id="IPR008280">
    <property type="entry name" value="Tub_FtsZ_C"/>
</dbReference>
<dbReference type="InterPro" id="IPR000217">
    <property type="entry name" value="Tubulin"/>
</dbReference>
<dbReference type="InterPro" id="IPR037103">
    <property type="entry name" value="Tubulin/FtsZ-like_C"/>
</dbReference>
<dbReference type="InterPro" id="IPR018316">
    <property type="entry name" value="Tubulin/FtsZ_2-layer-sand-dom"/>
</dbReference>
<dbReference type="InterPro" id="IPR036525">
    <property type="entry name" value="Tubulin/FtsZ_GTPase_sf"/>
</dbReference>
<dbReference type="InterPro" id="IPR023123">
    <property type="entry name" value="Tubulin_C"/>
</dbReference>
<dbReference type="InterPro" id="IPR017975">
    <property type="entry name" value="Tubulin_CS"/>
</dbReference>
<dbReference type="InterPro" id="IPR003008">
    <property type="entry name" value="Tubulin_FtsZ_GTPase"/>
</dbReference>
<dbReference type="PANTHER" id="PTHR11588">
    <property type="entry name" value="TUBULIN"/>
    <property type="match status" value="1"/>
</dbReference>
<dbReference type="Pfam" id="PF00091">
    <property type="entry name" value="Tubulin"/>
    <property type="match status" value="1"/>
</dbReference>
<dbReference type="Pfam" id="PF03953">
    <property type="entry name" value="Tubulin_C"/>
    <property type="match status" value="1"/>
</dbReference>
<dbReference type="PRINTS" id="PR01162">
    <property type="entry name" value="ALPHATUBULIN"/>
</dbReference>
<dbReference type="PRINTS" id="PR01161">
    <property type="entry name" value="TUBULIN"/>
</dbReference>
<dbReference type="SMART" id="SM00864">
    <property type="entry name" value="Tubulin"/>
    <property type="match status" value="1"/>
</dbReference>
<dbReference type="SMART" id="SM00865">
    <property type="entry name" value="Tubulin_C"/>
    <property type="match status" value="1"/>
</dbReference>
<dbReference type="SUPFAM" id="SSF55307">
    <property type="entry name" value="Tubulin C-terminal domain-like"/>
    <property type="match status" value="1"/>
</dbReference>
<dbReference type="SUPFAM" id="SSF52490">
    <property type="entry name" value="Tubulin nucleotide-binding domain-like"/>
    <property type="match status" value="1"/>
</dbReference>
<dbReference type="PROSITE" id="PS00227">
    <property type="entry name" value="TUBULIN"/>
    <property type="match status" value="1"/>
</dbReference>
<organism>
    <name type="scientific">Schizosaccharomyces pombe (strain 972 / ATCC 24843)</name>
    <name type="common">Fission yeast</name>
    <dbReference type="NCBI Taxonomy" id="284812"/>
    <lineage>
        <taxon>Eukaryota</taxon>
        <taxon>Fungi</taxon>
        <taxon>Dikarya</taxon>
        <taxon>Ascomycota</taxon>
        <taxon>Taphrinomycotina</taxon>
        <taxon>Schizosaccharomycetes</taxon>
        <taxon>Schizosaccharomycetales</taxon>
        <taxon>Schizosaccharomycetaceae</taxon>
        <taxon>Schizosaccharomyces</taxon>
    </lineage>
</organism>
<name>TBA2_SCHPO</name>
<sequence>MREIISIHVGQAGTQIGNACWELYCLEHGIQPNGYMNPETASQNSDGGFSTFFSETGQGKYVPRSIYVDLEPNVIDQVRTGPYRDLFHPEQLITGKEDASNNYARGHYTVGKELVDEVTDKIRRIADNCSGLQGFLVFHSFGGGTGSGFGALLLERLAMEYTKKSKLQFSVYPAPQVSTSVVEPYNSVLTTHATLDLADCTFMVDNESCYDICRRNLDIERPSYENLNRLIAQVVSSITASLRFEGSLNVDLAEFQTNLVPYPRIHFPLVTYAPIVSAAKAFHESNSVQEITNQCFEPYNQMVKCDPRAGRYMATCLLYRGDVIPRDVQAAVTTIKAKRTIQFVDWCPTGFKIGICDRPPQHIEGSEIAKVDRAVCMLSNTTSIAEAWSRLDHKFDLMYSKRAFVHWYVGEGMEEGEFSEAREDLAALERDYEEVGQDSMEVDYMEEEY</sequence>
<keyword id="KW-0963">Cytoplasm</keyword>
<keyword id="KW-0206">Cytoskeleton</keyword>
<keyword id="KW-0342">GTP-binding</keyword>
<keyword id="KW-0378">Hydrolase</keyword>
<keyword id="KW-0460">Magnesium</keyword>
<keyword id="KW-0479">Metal-binding</keyword>
<keyword id="KW-0493">Microtubule</keyword>
<keyword id="KW-0547">Nucleotide-binding</keyword>
<keyword id="KW-1185">Reference proteome</keyword>